<comment type="alternative products">
    <event type="alternative splicing"/>
    <isoform>
        <id>Q9NQ32-1</id>
        <name>1</name>
        <sequence type="displayed"/>
    </isoform>
    <isoform>
        <id>Q9NQ32-2</id>
        <name>2</name>
        <sequence type="described" ref="VSP_039850"/>
    </isoform>
</comment>
<protein>
    <recommendedName>
        <fullName>Uncharacterized protein C11orf16</fullName>
    </recommendedName>
</protein>
<gene>
    <name type="primary">C11orf16</name>
</gene>
<evidence type="ECO:0000256" key="1">
    <source>
        <dbReference type="SAM" id="MobiDB-lite"/>
    </source>
</evidence>
<evidence type="ECO:0000269" key="2">
    <source ref="2"/>
</evidence>
<evidence type="ECO:0000303" key="3">
    <source>
    </source>
</evidence>
<evidence type="ECO:0000305" key="4"/>
<dbReference type="EMBL" id="AJ400877">
    <property type="protein sequence ID" value="CAB92289.1"/>
    <property type="molecule type" value="Genomic_DNA"/>
</dbReference>
<dbReference type="EMBL" id="AK223377">
    <property type="protein sequence ID" value="BAD97097.1"/>
    <property type="molecule type" value="mRNA"/>
</dbReference>
<dbReference type="EMBL" id="AC026894">
    <property type="status" value="NOT_ANNOTATED_CDS"/>
    <property type="molecule type" value="Genomic_DNA"/>
</dbReference>
<dbReference type="EMBL" id="BC027865">
    <property type="protein sequence ID" value="AAH27865.1"/>
    <property type="molecule type" value="mRNA"/>
</dbReference>
<dbReference type="CCDS" id="CCDS7794.1">
    <molecule id="Q9NQ32-1"/>
</dbReference>
<dbReference type="RefSeq" id="NP_065694.2">
    <molecule id="Q9NQ32-1"/>
    <property type="nucleotide sequence ID" value="NM_020643.3"/>
</dbReference>
<dbReference type="RefSeq" id="XP_016873502.1">
    <property type="nucleotide sequence ID" value="XM_017018013.1"/>
</dbReference>
<dbReference type="BioGRID" id="121181">
    <property type="interactions" value="15"/>
</dbReference>
<dbReference type="FunCoup" id="Q9NQ32">
    <property type="interactions" value="7"/>
</dbReference>
<dbReference type="IntAct" id="Q9NQ32">
    <property type="interactions" value="2"/>
</dbReference>
<dbReference type="MINT" id="Q9NQ32"/>
<dbReference type="STRING" id="9606.ENSP00000318999"/>
<dbReference type="GlyGen" id="Q9NQ32">
    <property type="glycosylation" value="1 site, 1 O-linked glycan (1 site)"/>
</dbReference>
<dbReference type="PhosphoSitePlus" id="Q9NQ32"/>
<dbReference type="BioMuta" id="C11orf16"/>
<dbReference type="DMDM" id="308153616"/>
<dbReference type="jPOST" id="Q9NQ32"/>
<dbReference type="MassIVE" id="Q9NQ32"/>
<dbReference type="PaxDb" id="9606-ENSP00000318999"/>
<dbReference type="PeptideAtlas" id="Q9NQ32"/>
<dbReference type="ProteomicsDB" id="82066">
    <molecule id="Q9NQ32-1"/>
</dbReference>
<dbReference type="ProteomicsDB" id="82067">
    <molecule id="Q9NQ32-2"/>
</dbReference>
<dbReference type="Antibodypedia" id="55579">
    <property type="antibodies" value="51 antibodies from 11 providers"/>
</dbReference>
<dbReference type="DNASU" id="56673"/>
<dbReference type="Ensembl" id="ENST00000326053.10">
    <molecule id="Q9NQ32-1"/>
    <property type="protein sequence ID" value="ENSP00000318999.5"/>
    <property type="gene ID" value="ENSG00000176029.14"/>
</dbReference>
<dbReference type="Ensembl" id="ENST00000525780.5">
    <molecule id="Q9NQ32-2"/>
    <property type="protein sequence ID" value="ENSP00000436818.1"/>
    <property type="gene ID" value="ENSG00000176029.14"/>
</dbReference>
<dbReference type="GeneID" id="56673"/>
<dbReference type="KEGG" id="hsa:56673"/>
<dbReference type="MANE-Select" id="ENST00000326053.10">
    <property type="protein sequence ID" value="ENSP00000318999.5"/>
    <property type="RefSeq nucleotide sequence ID" value="NM_020643.3"/>
    <property type="RefSeq protein sequence ID" value="NP_065694.2"/>
</dbReference>
<dbReference type="UCSC" id="uc001mhb.5">
    <molecule id="Q9NQ32-1"/>
    <property type="organism name" value="human"/>
</dbReference>
<dbReference type="AGR" id="HGNC:1169"/>
<dbReference type="CTD" id="56673"/>
<dbReference type="GeneCards" id="C11orf16"/>
<dbReference type="HGNC" id="HGNC:1169">
    <property type="gene designation" value="C11orf16"/>
</dbReference>
<dbReference type="HPA" id="ENSG00000176029">
    <property type="expression patterns" value="Group enriched (choroid plexus, fallopian tube, lymphoid tissue)"/>
</dbReference>
<dbReference type="neXtProt" id="NX_Q9NQ32"/>
<dbReference type="OpenTargets" id="ENSG00000176029"/>
<dbReference type="VEuPathDB" id="HostDB:ENSG00000176029"/>
<dbReference type="eggNOG" id="ENOG502RXS8">
    <property type="taxonomic scope" value="Eukaryota"/>
</dbReference>
<dbReference type="GeneTree" id="ENSGT00390000012348"/>
<dbReference type="HOGENOM" id="CLU_056300_0_0_1"/>
<dbReference type="InParanoid" id="Q9NQ32"/>
<dbReference type="OMA" id="DHAVNTD"/>
<dbReference type="OrthoDB" id="6241467at2759"/>
<dbReference type="PAN-GO" id="Q9NQ32">
    <property type="GO annotations" value="0 GO annotations based on evolutionary models"/>
</dbReference>
<dbReference type="PhylomeDB" id="Q9NQ32"/>
<dbReference type="TreeFam" id="TF336135"/>
<dbReference type="PathwayCommons" id="Q9NQ32"/>
<dbReference type="SignaLink" id="Q9NQ32"/>
<dbReference type="BioGRID-ORCS" id="56673">
    <property type="hits" value="7 hits in 1115 CRISPR screens"/>
</dbReference>
<dbReference type="ChiTaRS" id="C11orf16">
    <property type="organism name" value="human"/>
</dbReference>
<dbReference type="GeneWiki" id="C11orf16"/>
<dbReference type="GenomeRNAi" id="56673"/>
<dbReference type="Pharos" id="Q9NQ32">
    <property type="development level" value="Tdark"/>
</dbReference>
<dbReference type="PRO" id="PR:Q9NQ32"/>
<dbReference type="Proteomes" id="UP000005640">
    <property type="component" value="Chromosome 11"/>
</dbReference>
<dbReference type="RNAct" id="Q9NQ32">
    <property type="molecule type" value="protein"/>
</dbReference>
<dbReference type="Bgee" id="ENSG00000176029">
    <property type="expression patterns" value="Expressed in epithelium of bronchus and 132 other cell types or tissues"/>
</dbReference>
<dbReference type="ExpressionAtlas" id="Q9NQ32">
    <property type="expression patterns" value="baseline and differential"/>
</dbReference>
<dbReference type="InterPro" id="IPR032770">
    <property type="entry name" value="DUF4537"/>
</dbReference>
<dbReference type="PANTHER" id="PTHR14343:SF3">
    <property type="entry name" value="SIMILAR TO PREDICTED GENE ICRFP703B1614Q5.5"/>
    <property type="match status" value="1"/>
</dbReference>
<dbReference type="PANTHER" id="PTHR14343">
    <property type="entry name" value="VWFA DOMAIN-CONTAINING PROTEIN"/>
    <property type="match status" value="1"/>
</dbReference>
<dbReference type="Pfam" id="PF15057">
    <property type="entry name" value="DUF4537"/>
    <property type="match status" value="1"/>
</dbReference>
<reference key="1">
    <citation type="journal article" date="2001" name="Cytogenet. Cell Genet.">
        <title>Comparative genomic sequencing reveals a strikingly similar architecture of a conserved syntenic region on human chromosome 11p15.3 (including gene ST5) and mouse chromosome 7.</title>
        <authorList>
            <person name="Amid C."/>
            <person name="Bahr A."/>
            <person name="Mujica A."/>
            <person name="Sampson N."/>
            <person name="Bikar S.E."/>
            <person name="Winterpacht A."/>
            <person name="Zabel B."/>
            <person name="Hankeln T."/>
            <person name="Schmidt E.R."/>
        </authorList>
    </citation>
    <scope>NUCLEOTIDE SEQUENCE [GENOMIC DNA] (ISOFORM 1)</scope>
</reference>
<reference key="2">
    <citation type="submission" date="2005-04" db="EMBL/GenBank/DDBJ databases">
        <authorList>
            <person name="Totoki Y."/>
            <person name="Toyoda A."/>
            <person name="Takeda T."/>
            <person name="Sakaki Y."/>
            <person name="Tanaka A."/>
            <person name="Yokoyama S."/>
        </authorList>
    </citation>
    <scope>NUCLEOTIDE SEQUENCE [LARGE SCALE MRNA] (ISOFORM 1)</scope>
    <scope>VARIANT LEU-210</scope>
    <source>
        <tissue>Lung</tissue>
    </source>
</reference>
<reference key="3">
    <citation type="journal article" date="2006" name="Nature">
        <title>Human chromosome 11 DNA sequence and analysis including novel gene identification.</title>
        <authorList>
            <person name="Taylor T.D."/>
            <person name="Noguchi H."/>
            <person name="Totoki Y."/>
            <person name="Toyoda A."/>
            <person name="Kuroki Y."/>
            <person name="Dewar K."/>
            <person name="Lloyd C."/>
            <person name="Itoh T."/>
            <person name="Takeda T."/>
            <person name="Kim D.-W."/>
            <person name="She X."/>
            <person name="Barlow K.F."/>
            <person name="Bloom T."/>
            <person name="Bruford E."/>
            <person name="Chang J.L."/>
            <person name="Cuomo C.A."/>
            <person name="Eichler E."/>
            <person name="FitzGerald M.G."/>
            <person name="Jaffe D.B."/>
            <person name="LaButti K."/>
            <person name="Nicol R."/>
            <person name="Park H.-S."/>
            <person name="Seaman C."/>
            <person name="Sougnez C."/>
            <person name="Yang X."/>
            <person name="Zimmer A.R."/>
            <person name="Zody M.C."/>
            <person name="Birren B.W."/>
            <person name="Nusbaum C."/>
            <person name="Fujiyama A."/>
            <person name="Hattori M."/>
            <person name="Rogers J."/>
            <person name="Lander E.S."/>
            <person name="Sakaki Y."/>
        </authorList>
    </citation>
    <scope>NUCLEOTIDE SEQUENCE [LARGE SCALE GENOMIC DNA]</scope>
</reference>
<reference key="4">
    <citation type="journal article" date="2004" name="Genome Res.">
        <title>The status, quality, and expansion of the NIH full-length cDNA project: the Mammalian Gene Collection (MGC).</title>
        <authorList>
            <consortium name="The MGC Project Team"/>
        </authorList>
    </citation>
    <scope>NUCLEOTIDE SEQUENCE [LARGE SCALE MRNA] (ISOFORM 2)</scope>
    <source>
        <tissue>Lung</tissue>
    </source>
</reference>
<accession>Q9NQ32</accession>
<accession>Q53FB2</accession>
<accession>Q8N6Y9</accession>
<name>CK016_HUMAN</name>
<feature type="chain" id="PRO_0000089832" description="Uncharacterized protein C11orf16">
    <location>
        <begin position="1"/>
        <end position="467"/>
    </location>
</feature>
<feature type="region of interest" description="Disordered" evidence="1">
    <location>
        <begin position="416"/>
        <end position="467"/>
    </location>
</feature>
<feature type="compositionally biased region" description="Polar residues" evidence="1">
    <location>
        <begin position="455"/>
        <end position="467"/>
    </location>
</feature>
<feature type="splice variant" id="VSP_039850" description="In isoform 2." evidence="3">
    <original>TRYSNICKEEKDHKQQRAQTAVVGTTKELVSKATHMKPPRTPPGEAEHRKRSQSLAICQWNKNSR</original>
    <variation>KE</variation>
    <location>
        <begin position="403"/>
        <end position="467"/>
    </location>
</feature>
<feature type="sequence variant" id="VAR_056827" description="In dbSNP:rs2568076.">
    <original>P</original>
    <variation>L</variation>
    <location>
        <position position="144"/>
    </location>
</feature>
<feature type="sequence variant" id="VAR_056828" description="In dbSNP:rs11042127." evidence="2">
    <original>V</original>
    <variation>L</variation>
    <location>
        <position position="210"/>
    </location>
</feature>
<feature type="sequence conflict" description="In Ref. 2; BAD97097." evidence="4" ref="2">
    <original>Q</original>
    <variation>R</variation>
    <location>
        <position position="169"/>
    </location>
</feature>
<feature type="sequence conflict" description="In Ref. 2; BAD97097 and 4; AAH27865." evidence="4" ref="2 4">
    <original>P</original>
    <variation>A</variation>
    <location>
        <position position="311"/>
    </location>
</feature>
<feature type="sequence conflict" description="In Ref. 1; CAB92289, 2; BAD97097 and 4; AAH27865." evidence="4" ref="1 2 4">
    <original>L</original>
    <variation>P</variation>
    <location>
        <position position="398"/>
    </location>
</feature>
<feature type="sequence conflict" description="In Ref. 1; CAB92289 and 2; BAD97097." evidence="4" ref="1 2">
    <original>A</original>
    <variation>V</variation>
    <location>
        <position position="423"/>
    </location>
</feature>
<feature type="sequence conflict" description="In Ref. 1; CAB92289." evidence="4" ref="1">
    <original>R</original>
    <variation>Q</variation>
    <location>
        <position position="442"/>
    </location>
</feature>
<proteinExistence type="evidence at protein level"/>
<keyword id="KW-0025">Alternative splicing</keyword>
<keyword id="KW-1267">Proteomics identification</keyword>
<keyword id="KW-1185">Reference proteome</keyword>
<sequence>MESSTGPRMPLLKYCSVATSLKAPGWDGAAPPWDLSFTYPFALQAPWLTGHKPLARHASSCPCLHVADPAWQGPGWLGRAGDAANTWVLARREADGFYYRAQIKATPELERQGVLLVEFEAPLVAGPKLPAQQQRVVLEEDVIPLSPSVGYSLRPGDKVLALWEPGQQQYGPGTVLLGLEMRDPQRASKEKEITVHFWNGKAAKVPLGGVQSVSLTIWKKAVERLHKSFTREHPRPLHWAPCCSLLGPITGRITNELPPDAPFLCPLCHHHACCQLLCQGCLCGCPPCGTTWWPLTRTSEVMARELPELEPTAQLLPLEGPKEEKVAMHAPLAVSSSSSSSCEQDGVENDLEMGPPQRLMVNSAVNTDPIFLEMPLRQSGLCQPEWRYWKRNGPEPCLGKPGTRYSNICKEEKDHKQQRAQTAVVGTTKELVSKATHMKPPRTPPGEAEHRKRSQSLAICQWNKNSR</sequence>
<organism>
    <name type="scientific">Homo sapiens</name>
    <name type="common">Human</name>
    <dbReference type="NCBI Taxonomy" id="9606"/>
    <lineage>
        <taxon>Eukaryota</taxon>
        <taxon>Metazoa</taxon>
        <taxon>Chordata</taxon>
        <taxon>Craniata</taxon>
        <taxon>Vertebrata</taxon>
        <taxon>Euteleostomi</taxon>
        <taxon>Mammalia</taxon>
        <taxon>Eutheria</taxon>
        <taxon>Euarchontoglires</taxon>
        <taxon>Primates</taxon>
        <taxon>Haplorrhini</taxon>
        <taxon>Catarrhini</taxon>
        <taxon>Hominidae</taxon>
        <taxon>Homo</taxon>
    </lineage>
</organism>